<proteinExistence type="inferred from homology"/>
<accession>P49488</accession>
<sequence>MGKVYDWFEERLEIQAIADDISSKYVPPHVNIFYCFGGIVFTCFLVQVATGFAMTFYYRPSVVDAFASVEYIMTSVNFGWLIRSIHRWSASMMVMMMVLHVFRVYLTGGFKKPRELTWVTGVILAVVTVSFGVTGYSLPWDQVGFWACKIVTGVPAAVPVVGPPLVLVLRGGESVGQSTLTRFYSAHTFVLPLAAAVLMLTHFLMIRKQGISGPL</sequence>
<gene>
    <name evidence="1" type="primary">petB</name>
</gene>
<keyword id="KW-0150">Chloroplast</keyword>
<keyword id="KW-0249">Electron transport</keyword>
<keyword id="KW-0349">Heme</keyword>
<keyword id="KW-0408">Iron</keyword>
<keyword id="KW-0472">Membrane</keyword>
<keyword id="KW-0479">Metal-binding</keyword>
<keyword id="KW-0602">Photosynthesis</keyword>
<keyword id="KW-0934">Plastid</keyword>
<keyword id="KW-0793">Thylakoid</keyword>
<keyword id="KW-0812">Transmembrane</keyword>
<keyword id="KW-1133">Transmembrane helix</keyword>
<keyword id="KW-0813">Transport</keyword>
<dbReference type="EMBL" id="Z67753">
    <property type="protein sequence ID" value="CAA91680.1"/>
    <property type="molecule type" value="Genomic_DNA"/>
</dbReference>
<dbReference type="PIR" id="S78307">
    <property type="entry name" value="S78307"/>
</dbReference>
<dbReference type="RefSeq" id="NP_043648.1">
    <property type="nucleotide sequence ID" value="NC_001713.1"/>
</dbReference>
<dbReference type="SMR" id="P49488"/>
<dbReference type="GeneID" id="801802"/>
<dbReference type="GO" id="GO:0009535">
    <property type="term" value="C:chloroplast thylakoid membrane"/>
    <property type="evidence" value="ECO:0007669"/>
    <property type="project" value="UniProtKB-SubCell"/>
</dbReference>
<dbReference type="GO" id="GO:0045158">
    <property type="term" value="F:electron transporter, transferring electrons within cytochrome b6/f complex of photosystem II activity"/>
    <property type="evidence" value="ECO:0007669"/>
    <property type="project" value="UniProtKB-UniRule"/>
</dbReference>
<dbReference type="GO" id="GO:0046872">
    <property type="term" value="F:metal ion binding"/>
    <property type="evidence" value="ECO:0007669"/>
    <property type="project" value="UniProtKB-KW"/>
</dbReference>
<dbReference type="GO" id="GO:0016491">
    <property type="term" value="F:oxidoreductase activity"/>
    <property type="evidence" value="ECO:0007669"/>
    <property type="project" value="InterPro"/>
</dbReference>
<dbReference type="GO" id="GO:0015979">
    <property type="term" value="P:photosynthesis"/>
    <property type="evidence" value="ECO:0007669"/>
    <property type="project" value="UniProtKB-UniRule"/>
</dbReference>
<dbReference type="GO" id="GO:0022904">
    <property type="term" value="P:respiratory electron transport chain"/>
    <property type="evidence" value="ECO:0007669"/>
    <property type="project" value="InterPro"/>
</dbReference>
<dbReference type="CDD" id="cd00284">
    <property type="entry name" value="Cytochrome_b_N"/>
    <property type="match status" value="1"/>
</dbReference>
<dbReference type="FunFam" id="1.20.810.10:FF:000001">
    <property type="entry name" value="Cytochrome b6"/>
    <property type="match status" value="1"/>
</dbReference>
<dbReference type="Gene3D" id="1.20.810.10">
    <property type="entry name" value="Cytochrome Bc1 Complex, Chain C"/>
    <property type="match status" value="1"/>
</dbReference>
<dbReference type="HAMAP" id="MF_00633">
    <property type="entry name" value="Cytb6_f_cytb6"/>
    <property type="match status" value="1"/>
</dbReference>
<dbReference type="InterPro" id="IPR005797">
    <property type="entry name" value="Cyt_b/b6_N"/>
</dbReference>
<dbReference type="InterPro" id="IPR023530">
    <property type="entry name" value="Cyt_B6_PetB"/>
</dbReference>
<dbReference type="InterPro" id="IPR027387">
    <property type="entry name" value="Cytb/b6-like_sf"/>
</dbReference>
<dbReference type="InterPro" id="IPR048259">
    <property type="entry name" value="Cytochrome_b_N_euk/bac"/>
</dbReference>
<dbReference type="InterPro" id="IPR016174">
    <property type="entry name" value="Di-haem_cyt_TM"/>
</dbReference>
<dbReference type="NCBIfam" id="NF002990">
    <property type="entry name" value="PRK03735.1"/>
    <property type="match status" value="1"/>
</dbReference>
<dbReference type="PANTHER" id="PTHR19271">
    <property type="entry name" value="CYTOCHROME B"/>
    <property type="match status" value="1"/>
</dbReference>
<dbReference type="PANTHER" id="PTHR19271:SF16">
    <property type="entry name" value="CYTOCHROME B"/>
    <property type="match status" value="1"/>
</dbReference>
<dbReference type="Pfam" id="PF00033">
    <property type="entry name" value="Cytochrome_B"/>
    <property type="match status" value="1"/>
</dbReference>
<dbReference type="PIRSF" id="PIRSF000032">
    <property type="entry name" value="Cytochrome_b6"/>
    <property type="match status" value="1"/>
</dbReference>
<dbReference type="SUPFAM" id="SSF81342">
    <property type="entry name" value="Transmembrane di-heme cytochromes"/>
    <property type="match status" value="1"/>
</dbReference>
<dbReference type="PROSITE" id="PS51002">
    <property type="entry name" value="CYTB_NTER"/>
    <property type="match status" value="1"/>
</dbReference>
<feature type="chain" id="PRO_0000061806" description="Cytochrome b6">
    <location>
        <begin position="1"/>
        <end position="215"/>
    </location>
</feature>
<feature type="transmembrane region" description="Helical" evidence="1">
    <location>
        <begin position="32"/>
        <end position="52"/>
    </location>
</feature>
<feature type="transmembrane region" description="Helical" evidence="1">
    <location>
        <begin position="90"/>
        <end position="110"/>
    </location>
</feature>
<feature type="transmembrane region" description="Helical" evidence="1">
    <location>
        <begin position="116"/>
        <end position="136"/>
    </location>
</feature>
<feature type="transmembrane region" description="Helical" evidence="1">
    <location>
        <begin position="186"/>
        <end position="206"/>
    </location>
</feature>
<feature type="binding site" description="covalent" evidence="1">
    <location>
        <position position="35"/>
    </location>
    <ligand>
        <name>heme c</name>
        <dbReference type="ChEBI" id="CHEBI:61717"/>
    </ligand>
</feature>
<feature type="binding site" description="axial binding residue" evidence="1">
    <location>
        <position position="86"/>
    </location>
    <ligand>
        <name>heme b</name>
        <dbReference type="ChEBI" id="CHEBI:60344"/>
        <label>2</label>
    </ligand>
    <ligandPart>
        <name>Fe</name>
        <dbReference type="ChEBI" id="CHEBI:18248"/>
    </ligandPart>
</feature>
<feature type="binding site" description="axial binding residue" evidence="1">
    <location>
        <position position="100"/>
    </location>
    <ligand>
        <name>heme b</name>
        <dbReference type="ChEBI" id="CHEBI:60344"/>
        <label>1</label>
    </ligand>
    <ligandPart>
        <name>Fe</name>
        <dbReference type="ChEBI" id="CHEBI:18248"/>
    </ligandPart>
</feature>
<feature type="binding site" description="axial binding residue" evidence="1">
    <location>
        <position position="187"/>
    </location>
    <ligand>
        <name>heme b</name>
        <dbReference type="ChEBI" id="CHEBI:60344"/>
        <label>2</label>
    </ligand>
    <ligandPart>
        <name>Fe</name>
        <dbReference type="ChEBI" id="CHEBI:18248"/>
    </ligandPart>
</feature>
<feature type="binding site" description="axial binding residue" evidence="1">
    <location>
        <position position="202"/>
    </location>
    <ligand>
        <name>heme b</name>
        <dbReference type="ChEBI" id="CHEBI:60344"/>
        <label>1</label>
    </ligand>
    <ligandPart>
        <name>Fe</name>
        <dbReference type="ChEBI" id="CHEBI:18248"/>
    </ligandPart>
</feature>
<name>CYB6_TRICV</name>
<evidence type="ECO:0000255" key="1">
    <source>
        <dbReference type="HAMAP-Rule" id="MF_00633"/>
    </source>
</evidence>
<organism>
    <name type="scientific">Trieres chinensis</name>
    <name type="common">Marine centric diatom</name>
    <name type="synonym">Odontella sinensis</name>
    <dbReference type="NCBI Taxonomy" id="1514140"/>
    <lineage>
        <taxon>Eukaryota</taxon>
        <taxon>Sar</taxon>
        <taxon>Stramenopiles</taxon>
        <taxon>Ochrophyta</taxon>
        <taxon>Bacillariophyta</taxon>
        <taxon>Mediophyceae</taxon>
        <taxon>Biddulphiophycidae</taxon>
        <taxon>Eupodiscales</taxon>
        <taxon>Parodontellaceae</taxon>
        <taxon>Trieres</taxon>
    </lineage>
</organism>
<geneLocation type="chloroplast"/>
<comment type="function">
    <text evidence="1">Component of the cytochrome b6-f complex, which mediates electron transfer between photosystem II (PSII) and photosystem I (PSI), cyclic electron flow around PSI, and state transitions.</text>
</comment>
<comment type="cofactor">
    <cofactor evidence="1">
        <name>heme b</name>
        <dbReference type="ChEBI" id="CHEBI:60344"/>
    </cofactor>
    <text evidence="1">Binds 2 heme b groups non-covalently with two histidine residues as axial ligands.</text>
</comment>
<comment type="cofactor">
    <cofactor evidence="1">
        <name>heme c</name>
        <dbReference type="ChEBI" id="CHEBI:61717"/>
    </cofactor>
    <text evidence="1">Binds one heme group covalently by a single cysteine link with no axial amino acid ligand. This heme was named heme ci.</text>
</comment>
<comment type="subunit">
    <text evidence="1">The 4 large subunits of the cytochrome b6-f complex are cytochrome b6, subunit IV (17 kDa polypeptide, PetD), cytochrome f and the Rieske protein, while the 4 small subunits are PetG, PetL, PetM and PetN. The complex functions as a dimer.</text>
</comment>
<comment type="subcellular location">
    <subcellularLocation>
        <location evidence="1">Plastid</location>
        <location evidence="1">Chloroplast thylakoid membrane</location>
        <topology evidence="1">Multi-pass membrane protein</topology>
    </subcellularLocation>
</comment>
<comment type="miscellaneous">
    <text evidence="1">Heme 1 (or BH or b566) is high-potential and absorbs at about 566 nm, and heme 2 (or BL or b562) is low-potential and absorbs at about 562 nm.</text>
</comment>
<comment type="similarity">
    <text evidence="1">Belongs to the cytochrome b family. PetB subfamily.</text>
</comment>
<protein>
    <recommendedName>
        <fullName evidence="1">Cytochrome b6</fullName>
    </recommendedName>
</protein>
<reference key="1">
    <citation type="journal article" date="1995" name="Plant Mol. Biol. Rep.">
        <title>The chloroplast genome of a chlorophyll a+c-containing alga, Odontella sinensis.</title>
        <authorList>
            <person name="Kowallik K.V."/>
            <person name="Stoebe B."/>
            <person name="Schaffran I."/>
            <person name="Kroth-Pancic P."/>
            <person name="Freier U."/>
        </authorList>
    </citation>
    <scope>NUCLEOTIDE SEQUENCE [LARGE SCALE GENOMIC DNA]</scope>
</reference>